<keyword id="KW-1185">Reference proteome</keyword>
<keyword id="KW-0687">Ribonucleoprotein</keyword>
<keyword id="KW-0689">Ribosomal protein</keyword>
<protein>
    <recommendedName>
        <fullName evidence="1">Large ribosomal subunit protein bL35</fullName>
    </recommendedName>
    <alternativeName>
        <fullName evidence="2">50S ribosomal protein L35</fullName>
    </alternativeName>
</protein>
<proteinExistence type="inferred from homology"/>
<organism>
    <name type="scientific">Jannaschia sp. (strain CCS1)</name>
    <dbReference type="NCBI Taxonomy" id="290400"/>
    <lineage>
        <taxon>Bacteria</taxon>
        <taxon>Pseudomonadati</taxon>
        <taxon>Pseudomonadota</taxon>
        <taxon>Alphaproteobacteria</taxon>
        <taxon>Rhodobacterales</taxon>
        <taxon>Roseobacteraceae</taxon>
        <taxon>Jannaschia</taxon>
    </lineage>
</organism>
<name>RL35_JANSC</name>
<dbReference type="EMBL" id="CP000264">
    <property type="protein sequence ID" value="ABD53367.1"/>
    <property type="molecule type" value="Genomic_DNA"/>
</dbReference>
<dbReference type="RefSeq" id="WP_011453576.1">
    <property type="nucleotide sequence ID" value="NC_007802.1"/>
</dbReference>
<dbReference type="SMR" id="Q28V95"/>
<dbReference type="STRING" id="290400.Jann_0450"/>
<dbReference type="KEGG" id="jan:Jann_0450"/>
<dbReference type="eggNOG" id="COG0291">
    <property type="taxonomic scope" value="Bacteria"/>
</dbReference>
<dbReference type="HOGENOM" id="CLU_169643_2_1_5"/>
<dbReference type="OrthoDB" id="9804851at2"/>
<dbReference type="Proteomes" id="UP000008326">
    <property type="component" value="Chromosome"/>
</dbReference>
<dbReference type="GO" id="GO:0022625">
    <property type="term" value="C:cytosolic large ribosomal subunit"/>
    <property type="evidence" value="ECO:0007669"/>
    <property type="project" value="TreeGrafter"/>
</dbReference>
<dbReference type="GO" id="GO:0003735">
    <property type="term" value="F:structural constituent of ribosome"/>
    <property type="evidence" value="ECO:0007669"/>
    <property type="project" value="InterPro"/>
</dbReference>
<dbReference type="GO" id="GO:0006412">
    <property type="term" value="P:translation"/>
    <property type="evidence" value="ECO:0007669"/>
    <property type="project" value="UniProtKB-UniRule"/>
</dbReference>
<dbReference type="FunFam" id="4.10.410.60:FF:000001">
    <property type="entry name" value="50S ribosomal protein L35"/>
    <property type="match status" value="1"/>
</dbReference>
<dbReference type="Gene3D" id="4.10.410.60">
    <property type="match status" value="1"/>
</dbReference>
<dbReference type="HAMAP" id="MF_00514">
    <property type="entry name" value="Ribosomal_bL35"/>
    <property type="match status" value="1"/>
</dbReference>
<dbReference type="InterPro" id="IPR001706">
    <property type="entry name" value="Ribosomal_bL35"/>
</dbReference>
<dbReference type="InterPro" id="IPR021137">
    <property type="entry name" value="Ribosomal_bL35-like"/>
</dbReference>
<dbReference type="InterPro" id="IPR018265">
    <property type="entry name" value="Ribosomal_bL35_CS"/>
</dbReference>
<dbReference type="InterPro" id="IPR037229">
    <property type="entry name" value="Ribosomal_bL35_sf"/>
</dbReference>
<dbReference type="NCBIfam" id="TIGR00001">
    <property type="entry name" value="rpmI_bact"/>
    <property type="match status" value="1"/>
</dbReference>
<dbReference type="PANTHER" id="PTHR33343">
    <property type="entry name" value="54S RIBOSOMAL PROTEIN BL35M"/>
    <property type="match status" value="1"/>
</dbReference>
<dbReference type="PANTHER" id="PTHR33343:SF1">
    <property type="entry name" value="LARGE RIBOSOMAL SUBUNIT PROTEIN BL35M"/>
    <property type="match status" value="1"/>
</dbReference>
<dbReference type="Pfam" id="PF01632">
    <property type="entry name" value="Ribosomal_L35p"/>
    <property type="match status" value="1"/>
</dbReference>
<dbReference type="PRINTS" id="PR00064">
    <property type="entry name" value="RIBOSOMALL35"/>
</dbReference>
<dbReference type="SUPFAM" id="SSF143034">
    <property type="entry name" value="L35p-like"/>
    <property type="match status" value="1"/>
</dbReference>
<dbReference type="PROSITE" id="PS00936">
    <property type="entry name" value="RIBOSOMAL_L35"/>
    <property type="match status" value="1"/>
</dbReference>
<sequence>MPKMKTKSSAKKRFKVTSTGKVMAAQAGKQHGMIKRSNKFLRNARGTSELSAPDSKIVKSYMPYDR</sequence>
<feature type="chain" id="PRO_0000258690" description="Large ribosomal subunit protein bL35">
    <location>
        <begin position="1"/>
        <end position="66"/>
    </location>
</feature>
<accession>Q28V95</accession>
<gene>
    <name evidence="1" type="primary">rpmI</name>
    <name type="ordered locus">Jann_0450</name>
</gene>
<reference key="1">
    <citation type="submission" date="2006-02" db="EMBL/GenBank/DDBJ databases">
        <title>Complete sequence of chromosome of Jannaschia sp. CCS1.</title>
        <authorList>
            <consortium name="US DOE Joint Genome Institute"/>
            <person name="Copeland A."/>
            <person name="Lucas S."/>
            <person name="Lapidus A."/>
            <person name="Barry K."/>
            <person name="Detter J.C."/>
            <person name="Glavina del Rio T."/>
            <person name="Hammon N."/>
            <person name="Israni S."/>
            <person name="Pitluck S."/>
            <person name="Brettin T."/>
            <person name="Bruce D."/>
            <person name="Han C."/>
            <person name="Tapia R."/>
            <person name="Gilna P."/>
            <person name="Chertkov O."/>
            <person name="Saunders E."/>
            <person name="Schmutz J."/>
            <person name="Larimer F."/>
            <person name="Land M."/>
            <person name="Kyrpides N."/>
            <person name="Lykidis A."/>
            <person name="Moran M.A."/>
            <person name="Belas R."/>
            <person name="Ye W."/>
            <person name="Buchan A."/>
            <person name="Gonzalez J.M."/>
            <person name="Schell M.A."/>
            <person name="Richardson P."/>
        </authorList>
    </citation>
    <scope>NUCLEOTIDE SEQUENCE [LARGE SCALE GENOMIC DNA]</scope>
    <source>
        <strain>CCS1</strain>
    </source>
</reference>
<evidence type="ECO:0000255" key="1">
    <source>
        <dbReference type="HAMAP-Rule" id="MF_00514"/>
    </source>
</evidence>
<evidence type="ECO:0000305" key="2"/>
<comment type="similarity">
    <text evidence="1">Belongs to the bacterial ribosomal protein bL35 family.</text>
</comment>